<organism>
    <name type="scientific">Meiothermus ruber</name>
    <dbReference type="NCBI Taxonomy" id="277"/>
    <lineage>
        <taxon>Bacteria</taxon>
        <taxon>Thermotogati</taxon>
        <taxon>Deinococcota</taxon>
        <taxon>Deinococci</taxon>
        <taxon>Thermales</taxon>
        <taxon>Thermaceae</taxon>
        <taxon>Meiothermus</taxon>
    </lineage>
</organism>
<name>GRPE_MEIRU</name>
<comment type="function">
    <text evidence="1">Participates actively in the response to hyperosmotic and heat shock by preventing the aggregation of stress-denatured proteins, in association with DnaK and GrpE. It is the nucleotide exchange factor for DnaK and may function as a thermosensor. Unfolded proteins bind initially to DnaJ; upon interaction with the DnaJ-bound protein, DnaK hydrolyzes its bound ATP, resulting in the formation of a stable complex. GrpE releases ADP from DnaK; ATP binding to DnaK triggers the release of the substrate protein, thus completing the reaction cycle. Several rounds of ATP-dependent interactions between DnaJ, DnaK and GrpE are required for fully efficient folding.</text>
</comment>
<comment type="subunit">
    <text evidence="1">Homodimer.</text>
</comment>
<comment type="subcellular location">
    <subcellularLocation>
        <location evidence="1">Cytoplasm</location>
    </subcellularLocation>
</comment>
<comment type="similarity">
    <text evidence="1">Belongs to the GrpE family.</text>
</comment>
<accession>Q8L2F3</accession>
<dbReference type="EMBL" id="AF507046">
    <property type="protein sequence ID" value="AAM28894.1"/>
    <property type="molecule type" value="Genomic_DNA"/>
</dbReference>
<dbReference type="SMR" id="Q8L2F3"/>
<dbReference type="GO" id="GO:0005737">
    <property type="term" value="C:cytoplasm"/>
    <property type="evidence" value="ECO:0007669"/>
    <property type="project" value="UniProtKB-SubCell"/>
</dbReference>
<dbReference type="GO" id="GO:0000774">
    <property type="term" value="F:adenyl-nucleotide exchange factor activity"/>
    <property type="evidence" value="ECO:0007669"/>
    <property type="project" value="InterPro"/>
</dbReference>
<dbReference type="GO" id="GO:0042803">
    <property type="term" value="F:protein homodimerization activity"/>
    <property type="evidence" value="ECO:0007669"/>
    <property type="project" value="InterPro"/>
</dbReference>
<dbReference type="GO" id="GO:0051087">
    <property type="term" value="F:protein-folding chaperone binding"/>
    <property type="evidence" value="ECO:0007669"/>
    <property type="project" value="InterPro"/>
</dbReference>
<dbReference type="GO" id="GO:0051082">
    <property type="term" value="F:unfolded protein binding"/>
    <property type="evidence" value="ECO:0007669"/>
    <property type="project" value="TreeGrafter"/>
</dbReference>
<dbReference type="GO" id="GO:0006457">
    <property type="term" value="P:protein folding"/>
    <property type="evidence" value="ECO:0007669"/>
    <property type="project" value="InterPro"/>
</dbReference>
<dbReference type="CDD" id="cd00446">
    <property type="entry name" value="GrpE"/>
    <property type="match status" value="1"/>
</dbReference>
<dbReference type="Gene3D" id="3.90.20.20">
    <property type="match status" value="1"/>
</dbReference>
<dbReference type="Gene3D" id="2.30.22.10">
    <property type="entry name" value="Head domain of nucleotide exchange factor GrpE"/>
    <property type="match status" value="1"/>
</dbReference>
<dbReference type="HAMAP" id="MF_01151">
    <property type="entry name" value="GrpE"/>
    <property type="match status" value="1"/>
</dbReference>
<dbReference type="InterPro" id="IPR000740">
    <property type="entry name" value="GrpE"/>
</dbReference>
<dbReference type="InterPro" id="IPR013805">
    <property type="entry name" value="GrpE_coiled_coil"/>
</dbReference>
<dbReference type="InterPro" id="IPR009012">
    <property type="entry name" value="GrpE_head"/>
</dbReference>
<dbReference type="PANTHER" id="PTHR21237">
    <property type="entry name" value="GRPE PROTEIN"/>
    <property type="match status" value="1"/>
</dbReference>
<dbReference type="PANTHER" id="PTHR21237:SF23">
    <property type="entry name" value="GRPE PROTEIN HOMOLOG, MITOCHONDRIAL"/>
    <property type="match status" value="1"/>
</dbReference>
<dbReference type="Pfam" id="PF01025">
    <property type="entry name" value="GrpE"/>
    <property type="match status" value="1"/>
</dbReference>
<dbReference type="PRINTS" id="PR00773">
    <property type="entry name" value="GRPEPROTEIN"/>
</dbReference>
<dbReference type="SUPFAM" id="SSF58014">
    <property type="entry name" value="Coiled-coil domain of nucleotide exchange factor GrpE"/>
    <property type="match status" value="1"/>
</dbReference>
<dbReference type="SUPFAM" id="SSF51064">
    <property type="entry name" value="Head domain of nucleotide exchange factor GrpE"/>
    <property type="match status" value="1"/>
</dbReference>
<dbReference type="PROSITE" id="PS01071">
    <property type="entry name" value="GRPE"/>
    <property type="match status" value="1"/>
</dbReference>
<evidence type="ECO:0000255" key="1">
    <source>
        <dbReference type="HAMAP-Rule" id="MF_01151"/>
    </source>
</evidence>
<gene>
    <name evidence="1" type="primary">grpE</name>
</gene>
<proteinExistence type="inferred from homology"/>
<feature type="chain" id="PRO_0000113810" description="Protein GrpE">
    <location>
        <begin position="1"/>
        <end position="176"/>
    </location>
</feature>
<sequence>MENNEPVVETPEAQNDLPEVERLKGEVEFLKAELEASKNKFLRLYADFENYKKRMVQELEAAQRNGKFDAVRALLGTLDDLERALGFASVKPEDLIPGVRSVLENFTRSLKSLGVEAVPGVGAEFDPRYHEAIGAVEGEEGKVMHVYQQGFKYGDLLVRPARVVVGSGAKPEEAEA</sequence>
<protein>
    <recommendedName>
        <fullName evidence="1">Protein GrpE</fullName>
    </recommendedName>
    <alternativeName>
        <fullName evidence="1">HSP-70 cofactor</fullName>
    </alternativeName>
</protein>
<keyword id="KW-0143">Chaperone</keyword>
<keyword id="KW-0963">Cytoplasm</keyword>
<keyword id="KW-0346">Stress response</keyword>
<reference key="1">
    <citation type="journal article" date="2003" name="Mol. Genet. Genomics">
        <title>Identification and characterization of a Hsp70 (DnaK) chaperone system from Meiothermus ruber.</title>
        <authorList>
            <person name="Pleckaityte M."/>
            <person name="Mistiniene E."/>
            <person name="Michailoviene V."/>
            <person name="Zvirblis G."/>
        </authorList>
    </citation>
    <scope>NUCLEOTIDE SEQUENCE [GENOMIC DNA]</scope>
</reference>